<dbReference type="EMBL" id="BX571857">
    <property type="protein sequence ID" value="CAG44198.1"/>
    <property type="status" value="ALT_INIT"/>
    <property type="molecule type" value="Genomic_DNA"/>
</dbReference>
<dbReference type="RefSeq" id="WP_000998872.1">
    <property type="nucleotide sequence ID" value="NC_002953.3"/>
</dbReference>
<dbReference type="SMR" id="Q6G6H7"/>
<dbReference type="KEGG" id="sas:SAS2384"/>
<dbReference type="HOGENOM" id="CLU_2095348_0_0_9"/>
<dbReference type="GO" id="GO:0005737">
    <property type="term" value="C:cytoplasm"/>
    <property type="evidence" value="ECO:0007669"/>
    <property type="project" value="UniProtKB-SubCell"/>
</dbReference>
<dbReference type="GO" id="GO:0003677">
    <property type="term" value="F:DNA binding"/>
    <property type="evidence" value="ECO:0007669"/>
    <property type="project" value="UniProtKB-KW"/>
</dbReference>
<dbReference type="GO" id="GO:0003700">
    <property type="term" value="F:DNA-binding transcription factor activity"/>
    <property type="evidence" value="ECO:0007669"/>
    <property type="project" value="InterPro"/>
</dbReference>
<dbReference type="GO" id="GO:0006950">
    <property type="term" value="P:response to stress"/>
    <property type="evidence" value="ECO:0007669"/>
    <property type="project" value="TreeGrafter"/>
</dbReference>
<dbReference type="Gene3D" id="1.10.10.10">
    <property type="entry name" value="Winged helix-like DNA-binding domain superfamily/Winged helix DNA-binding domain"/>
    <property type="match status" value="1"/>
</dbReference>
<dbReference type="InterPro" id="IPR039422">
    <property type="entry name" value="MarR/SlyA-like"/>
</dbReference>
<dbReference type="InterPro" id="IPR010166">
    <property type="entry name" value="SarA/Rot_dom"/>
</dbReference>
<dbReference type="InterPro" id="IPR055166">
    <property type="entry name" value="Transc_reg_Sar_Rot_HTH"/>
</dbReference>
<dbReference type="InterPro" id="IPR036388">
    <property type="entry name" value="WH-like_DNA-bd_sf"/>
</dbReference>
<dbReference type="InterPro" id="IPR036390">
    <property type="entry name" value="WH_DNA-bd_sf"/>
</dbReference>
<dbReference type="NCBIfam" id="TIGR01889">
    <property type="entry name" value="Staph_reg_Sar"/>
    <property type="match status" value="1"/>
</dbReference>
<dbReference type="PANTHER" id="PTHR33164:SF5">
    <property type="entry name" value="ORGANIC HYDROPEROXIDE RESISTANCE TRANSCRIPTIONAL REGULATOR"/>
    <property type="match status" value="1"/>
</dbReference>
<dbReference type="PANTHER" id="PTHR33164">
    <property type="entry name" value="TRANSCRIPTIONAL REGULATOR, MARR FAMILY"/>
    <property type="match status" value="1"/>
</dbReference>
<dbReference type="Pfam" id="PF22381">
    <property type="entry name" value="Staph_reg_Sar_Rot"/>
    <property type="match status" value="1"/>
</dbReference>
<dbReference type="SUPFAM" id="SSF46785">
    <property type="entry name" value="Winged helix' DNA-binding domain"/>
    <property type="match status" value="1"/>
</dbReference>
<name>SART_STAAS</name>
<reference key="1">
    <citation type="journal article" date="2004" name="Proc. Natl. Acad. Sci. U.S.A.">
        <title>Complete genomes of two clinical Staphylococcus aureus strains: evidence for the rapid evolution of virulence and drug resistance.</title>
        <authorList>
            <person name="Holden M.T.G."/>
            <person name="Feil E.J."/>
            <person name="Lindsay J.A."/>
            <person name="Peacock S.J."/>
            <person name="Day N.P.J."/>
            <person name="Enright M.C."/>
            <person name="Foster T.J."/>
            <person name="Moore C.E."/>
            <person name="Hurst L."/>
            <person name="Atkin R."/>
            <person name="Barron A."/>
            <person name="Bason N."/>
            <person name="Bentley S.D."/>
            <person name="Chillingworth C."/>
            <person name="Chillingworth T."/>
            <person name="Churcher C."/>
            <person name="Clark L."/>
            <person name="Corton C."/>
            <person name="Cronin A."/>
            <person name="Doggett J."/>
            <person name="Dowd L."/>
            <person name="Feltwell T."/>
            <person name="Hance Z."/>
            <person name="Harris B."/>
            <person name="Hauser H."/>
            <person name="Holroyd S."/>
            <person name="Jagels K."/>
            <person name="James K.D."/>
            <person name="Lennard N."/>
            <person name="Line A."/>
            <person name="Mayes R."/>
            <person name="Moule S."/>
            <person name="Mungall K."/>
            <person name="Ormond D."/>
            <person name="Quail M.A."/>
            <person name="Rabbinowitsch E."/>
            <person name="Rutherford K.M."/>
            <person name="Sanders M."/>
            <person name="Sharp S."/>
            <person name="Simmonds M."/>
            <person name="Stevens K."/>
            <person name="Whitehead S."/>
            <person name="Barrell B.G."/>
            <person name="Spratt B.G."/>
            <person name="Parkhill J."/>
        </authorList>
    </citation>
    <scope>NUCLEOTIDE SEQUENCE [LARGE SCALE GENOMIC DNA]</scope>
    <source>
        <strain>MSSA476</strain>
    </source>
</reference>
<organism>
    <name type="scientific">Staphylococcus aureus (strain MSSA476)</name>
    <dbReference type="NCBI Taxonomy" id="282459"/>
    <lineage>
        <taxon>Bacteria</taxon>
        <taxon>Bacillati</taxon>
        <taxon>Bacillota</taxon>
        <taxon>Bacilli</taxon>
        <taxon>Bacillales</taxon>
        <taxon>Staphylococcaceae</taxon>
        <taxon>Staphylococcus</taxon>
    </lineage>
</organism>
<feature type="chain" id="PRO_0000219600" description="HTH-type transcriptional regulator SarT">
    <location>
        <begin position="1"/>
        <end position="118"/>
    </location>
</feature>
<feature type="DNA-binding region" description="H-T-H motif" evidence="2">
    <location>
        <begin position="55"/>
        <end position="78"/>
    </location>
</feature>
<gene>
    <name type="primary">sarT</name>
    <name type="ordered locus">SAS2384</name>
</gene>
<keyword id="KW-0010">Activator</keyword>
<keyword id="KW-0963">Cytoplasm</keyword>
<keyword id="KW-0238">DNA-binding</keyword>
<keyword id="KW-0678">Repressor</keyword>
<keyword id="KW-0804">Transcription</keyword>
<keyword id="KW-0805">Transcription regulation</keyword>
<keyword id="KW-0843">Virulence</keyword>
<accession>Q6G6H7</accession>
<protein>
    <recommendedName>
        <fullName>HTH-type transcriptional regulator SarT</fullName>
    </recommendedName>
    <alternativeName>
        <fullName>Staphylococcal accessory regulator T</fullName>
    </alternativeName>
</protein>
<evidence type="ECO:0000250" key="1"/>
<evidence type="ECO:0000255" key="2"/>
<evidence type="ECO:0000305" key="3"/>
<sequence length="118" mass="14002">MNDLKSKSNIKLMKRVLTTYELRKYLKKYFCLTLDNYLVLAYLDVFKNDEGKYFMRDIISYIGIDQSRIVKSVKELSKKGYLNKCRDPHDSRNVIIVVSVKQHNYIKNLLSEININET</sequence>
<comment type="function">
    <text evidence="1">Transcriptional regulator acting as an intermediary between major regulators SarA and agr and virulence genes. Represses alpha-hemolysin (hla) gene expression (By similarity).</text>
</comment>
<comment type="subcellular location">
    <subcellularLocation>
        <location evidence="1">Cytoplasm</location>
    </subcellularLocation>
</comment>
<comment type="similarity">
    <text evidence="3">Belongs to the SarA family.</text>
</comment>
<comment type="sequence caution" evidence="3">
    <conflict type="erroneous initiation">
        <sequence resource="EMBL-CDS" id="CAG44198"/>
    </conflict>
</comment>
<proteinExistence type="inferred from homology"/>